<dbReference type="EMBL" id="X69057">
    <property type="protein sequence ID" value="CAA48795.1"/>
    <property type="molecule type" value="mRNA"/>
</dbReference>
<dbReference type="SMR" id="Q05000"/>
<dbReference type="GO" id="GO:0005923">
    <property type="term" value="C:bicellular tight junction"/>
    <property type="evidence" value="ECO:0007669"/>
    <property type="project" value="TreeGrafter"/>
</dbReference>
<dbReference type="GO" id="GO:0030016">
    <property type="term" value="C:myofibril"/>
    <property type="evidence" value="ECO:0007669"/>
    <property type="project" value="UniProtKB-SubCell"/>
</dbReference>
<dbReference type="GO" id="GO:0016459">
    <property type="term" value="C:myosin complex"/>
    <property type="evidence" value="ECO:0007669"/>
    <property type="project" value="UniProtKB-KW"/>
</dbReference>
<dbReference type="GO" id="GO:0032982">
    <property type="term" value="C:myosin filament"/>
    <property type="evidence" value="ECO:0007669"/>
    <property type="project" value="UniProtKB-KW"/>
</dbReference>
<dbReference type="GO" id="GO:0003779">
    <property type="term" value="F:actin binding"/>
    <property type="evidence" value="ECO:0007669"/>
    <property type="project" value="UniProtKB-KW"/>
</dbReference>
<dbReference type="GO" id="GO:0005524">
    <property type="term" value="F:ATP binding"/>
    <property type="evidence" value="ECO:0007669"/>
    <property type="project" value="UniProtKB-KW"/>
</dbReference>
<dbReference type="FunFam" id="1.20.5.370:FF:000008">
    <property type="entry name" value="Myosin heavy chain"/>
    <property type="match status" value="1"/>
</dbReference>
<dbReference type="Gene3D" id="1.10.287.1490">
    <property type="match status" value="1"/>
</dbReference>
<dbReference type="Gene3D" id="1.20.5.340">
    <property type="match status" value="1"/>
</dbReference>
<dbReference type="Gene3D" id="1.20.5.370">
    <property type="match status" value="5"/>
</dbReference>
<dbReference type="InterPro" id="IPR002928">
    <property type="entry name" value="Myosin_tail"/>
</dbReference>
<dbReference type="InterPro" id="IPR014751">
    <property type="entry name" value="XRCC4-like_C"/>
</dbReference>
<dbReference type="PANTHER" id="PTHR46349">
    <property type="entry name" value="CINGULIN-LIKE PROTEIN 1-RELATED"/>
    <property type="match status" value="1"/>
</dbReference>
<dbReference type="PANTHER" id="PTHR46349:SF6">
    <property type="entry name" value="MYOSIN-6-LIKE"/>
    <property type="match status" value="1"/>
</dbReference>
<dbReference type="Pfam" id="PF01576">
    <property type="entry name" value="Myosin_tail_1"/>
    <property type="match status" value="1"/>
</dbReference>
<dbReference type="SUPFAM" id="SSF90257">
    <property type="entry name" value="Myosin rod fragments"/>
    <property type="match status" value="3"/>
</dbReference>
<dbReference type="SUPFAM" id="SSF57997">
    <property type="entry name" value="Tropomyosin"/>
    <property type="match status" value="1"/>
</dbReference>
<protein>
    <recommendedName>
        <fullName>Myosin heavy chain</fullName>
    </recommendedName>
</protein>
<organism>
    <name type="scientific">Podocoryna carnea</name>
    <name type="common">Hydrozoan</name>
    <dbReference type="NCBI Taxonomy" id="6096"/>
    <lineage>
        <taxon>Eukaryota</taxon>
        <taxon>Metazoa</taxon>
        <taxon>Cnidaria</taxon>
        <taxon>Hydrozoa</taxon>
        <taxon>Hydroidolina</taxon>
        <taxon>Anthoathecata</taxon>
        <taxon>Filifera</taxon>
        <taxon>Hydractiniidae</taxon>
        <taxon>Podocoryna</taxon>
    </lineage>
</organism>
<reference key="1">
    <citation type="journal article" date="1993" name="Differentiation">
        <title>Life stage specific expression of a myosin heavy chain in the hydrozoan Podocoryne carnea.</title>
        <authorList>
            <person name="Schuchert P."/>
            <person name="Reber-Mueller S."/>
            <person name="Schmid V."/>
        </authorList>
    </citation>
    <scope>NUCLEOTIDE SEQUENCE [MRNA]</scope>
</reference>
<keyword id="KW-0009">Actin-binding</keyword>
<keyword id="KW-0067">ATP-binding</keyword>
<keyword id="KW-0175">Coiled coil</keyword>
<keyword id="KW-0963">Cytoplasm</keyword>
<keyword id="KW-0505">Motor protein</keyword>
<keyword id="KW-0514">Muscle protein</keyword>
<keyword id="KW-0518">Myosin</keyword>
<keyword id="KW-0547">Nucleotide-binding</keyword>
<keyword id="KW-0787">Thick filament</keyword>
<comment type="function">
    <text>Myosin is a protein that binds to F-actin and has ATPase activity that is activated by F-actin.</text>
</comment>
<comment type="subcellular location">
    <subcellularLocation>
        <location>Cytoplasm</location>
        <location>Myofibril</location>
    </subcellularLocation>
    <text>Thick filaments of the myofibrils.</text>
</comment>
<comment type="developmental stage">
    <text>Only present in the striated muscle cells of the medusa stage.</text>
</comment>
<evidence type="ECO:0000255" key="1"/>
<evidence type="ECO:0000256" key="2">
    <source>
        <dbReference type="SAM" id="MobiDB-lite"/>
    </source>
</evidence>
<name>MYS_PODCA</name>
<feature type="chain" id="PRO_0000123386" description="Myosin heavy chain">
    <location>
        <begin position="1" status="less than"/>
        <end position="692"/>
    </location>
</feature>
<feature type="region of interest" description="Rodlike tail">
    <location>
        <begin position="1" status="less than"/>
        <end position="692"/>
    </location>
</feature>
<feature type="region of interest" description="Disordered" evidence="2">
    <location>
        <begin position="1"/>
        <end position="27"/>
    </location>
</feature>
<feature type="region of interest" description="Disordered" evidence="2">
    <location>
        <begin position="48"/>
        <end position="71"/>
    </location>
</feature>
<feature type="region of interest" description="Disordered" evidence="2">
    <location>
        <begin position="307"/>
        <end position="422"/>
    </location>
</feature>
<feature type="region of interest" description="Disordered" evidence="2">
    <location>
        <begin position="506"/>
        <end position="529"/>
    </location>
</feature>
<feature type="region of interest" description="Disordered" evidence="2">
    <location>
        <begin position="644"/>
        <end position="692"/>
    </location>
</feature>
<feature type="coiled-coil region" evidence="1">
    <location>
        <begin position="25"/>
        <end position="670"/>
    </location>
</feature>
<feature type="compositionally biased region" description="Acidic residues" evidence="2">
    <location>
        <begin position="1"/>
        <end position="10"/>
    </location>
</feature>
<feature type="compositionally biased region" description="Polar residues" evidence="2">
    <location>
        <begin position="11"/>
        <end position="20"/>
    </location>
</feature>
<feature type="compositionally biased region" description="Basic and acidic residues" evidence="2">
    <location>
        <begin position="56"/>
        <end position="70"/>
    </location>
</feature>
<feature type="compositionally biased region" description="Basic and acidic residues" evidence="2">
    <location>
        <begin position="342"/>
        <end position="359"/>
    </location>
</feature>
<feature type="compositionally biased region" description="Basic and acidic residues" evidence="2">
    <location>
        <begin position="398"/>
        <end position="418"/>
    </location>
</feature>
<feature type="compositionally biased region" description="Polar residues" evidence="2">
    <location>
        <begin position="506"/>
        <end position="524"/>
    </location>
</feature>
<feature type="compositionally biased region" description="Low complexity" evidence="2">
    <location>
        <begin position="662"/>
        <end position="675"/>
    </location>
</feature>
<feature type="non-terminal residue">
    <location>
        <position position="1"/>
    </location>
</feature>
<accession>Q05000</accession>
<sequence>KVSQLEDDLTTSEAKNTKAASRSGGLAKQLADAEHKLGLATKNIKSLEGALSDAKSAAEDESKGKHDNHQKLQNALSEIEALTEQLDEEQASRQDLQNKFSRANADAQQWKNKYDTDGASRVEELEDAKRKLANRVQEMEEALAAAESKAASMEKVKNRMNEEVEDLLLDLEKAQAQASNLEKKQKKVDQQINEWKLKCDEIQADLDKAQRDARGYSTELLKVRTASEDTIEKYDALKKENRALSAELQSVTEQLSDGGKNSAEVEKLRRKLGMENEELQIALEEAEAALEQEEGKLLKVQLEYTQLRQSSDRKLSEKDEELEGLRKNHQRQMESLQNTIDSESRSKAEQQKLRKKYDADMMELESQLESSNRVAAESQKQMKKLQAQIKELQSMIDDESRGRDDMRDSASRSERRANDLAVQLDEARVALEQAERARKLAENEKSENSDRVAELQALYNNVANAKAEGDYHSLQEEIEDLENEAKASEDKAQRAMAEVARLMSELNSAQEATSTAEKSRQLVSKQVADLQSRLEDAEAQGGKGLKNQLRKLEQRIMELESDVDTEARKGADAIKAARKSEKKVKELAFTIEDEHKRREPAQDTADKLNQKLKKMRMQLEEAEQQKSTWQSKYKKAAVELEDAEERCEAAEAALQKARQRARGASGSATRGASRAPSQPRTPRSKTARAGED</sequence>
<proteinExistence type="evidence at transcript level"/>